<comment type="function">
    <text evidence="1">Might act as an E3 ubiquitin-protein ligase, or as part of E3 complex, which accepts ubiquitin from specific E2 ubiquitin-conjugating enzymes and then transfers it to substrates.</text>
</comment>
<comment type="catalytic activity">
    <reaction evidence="2">
        <text>[E2 ubiquitin-conjugating enzyme]-S-ubiquitinyl-L-cysteine + [acceptor protein]-L-lysine = [E2 ubiquitin-conjugating enzyme]-L-cysteine + [acceptor protein]-N(6)-ubiquitinyl-L-lysine.</text>
        <dbReference type="EC" id="2.3.2.31"/>
    </reaction>
</comment>
<comment type="domain">
    <text evidence="2">Members of the RBR family are atypical E3 ligases. They interact with the E2 conjugating enzyme UBE2L3 and function like HECT-type E3 enzymes: they bind E2s via the first RING domain, but require an obligate trans-thiolation step during the ubiquitin transfer, requiring a conserved cysteine residue in the second RING domain.</text>
</comment>
<comment type="similarity">
    <text evidence="8">Belongs to the RBR family.</text>
</comment>
<comment type="caution">
    <text evidence="8">Lacks one Cys residue in the IBR-type zinc finger domain that is one of the conserved features of the family.</text>
</comment>
<comment type="sequence caution" evidence="8">
    <conflict type="erroneous termination">
        <sequence resource="EMBL-CDS" id="AAH79620"/>
    </conflict>
    <text>Truncated C-terminus.</text>
</comment>
<accession>Q6ZPS6</accession>
<accession>Q6AXE1</accession>
<evidence type="ECO:0000250" key="1"/>
<evidence type="ECO:0000250" key="2">
    <source>
        <dbReference type="UniProtKB" id="O60260"/>
    </source>
</evidence>
<evidence type="ECO:0000250" key="3">
    <source>
        <dbReference type="UniProtKB" id="Q9P2G1"/>
    </source>
</evidence>
<evidence type="ECO:0000255" key="4"/>
<evidence type="ECO:0000255" key="5">
    <source>
        <dbReference type="PROSITE-ProRule" id="PRU00213"/>
    </source>
</evidence>
<evidence type="ECO:0000255" key="6">
    <source>
        <dbReference type="PROSITE-ProRule" id="PRU01221"/>
    </source>
</evidence>
<evidence type="ECO:0000256" key="7">
    <source>
        <dbReference type="SAM" id="MobiDB-lite"/>
    </source>
</evidence>
<evidence type="ECO:0000305" key="8"/>
<evidence type="ECO:0007744" key="9">
    <source>
    </source>
</evidence>
<evidence type="ECO:0007744" key="10">
    <source>
    </source>
</evidence>
<keyword id="KW-0040">ANK repeat</keyword>
<keyword id="KW-0175">Coiled coil</keyword>
<keyword id="KW-0449">Lipoprotein</keyword>
<keyword id="KW-0479">Metal-binding</keyword>
<keyword id="KW-0519">Myristate</keyword>
<keyword id="KW-0597">Phosphoprotein</keyword>
<keyword id="KW-1185">Reference proteome</keyword>
<keyword id="KW-0677">Repeat</keyword>
<keyword id="KW-0808">Transferase</keyword>
<keyword id="KW-0833">Ubl conjugation pathway</keyword>
<keyword id="KW-0862">Zinc</keyword>
<keyword id="KW-0863">Zinc-finger</keyword>
<sequence>MGNTTTKFRKALINGDENLACQIYENNPQLKESLDPNISYGEPYQHNTPLHYAARHGMNRILGTFLFGRDGNPNKRNVHNETSMHLLCMGPQIMISEGTLHPRLARPVEDDFRRADCLQMILQWKGAKLDQGEYERAAIDAVDNKKNTPLHYAAASGMKACVELLVKHGGDLFAENENRDTPCDCAEKQQHKDLALSLESQMVFSRDPEAEEIEAEYAALDKREPYEGLRPQDLRRLKDMLIVETADMLQAPLFTAEALLRAHDWDREKLLEAWMSNPENCCQRSGVQMPTPPPSGYNAWDTLPSPRTPRTTRSSVTSPDEISLSPGDLDTSLCDICMCSISVFEDPVDMPCGHDFCRGCWEAFLNLKIQEGEAHNIFCPAYECFQLVPVDVIESVVSKEMDKRYLQFDIKAFVENNPAIKWCPTAGCERAVRLTKQGSNPSGSDTLSFPLLRAPAVDCGKGHLFCWECLGEAHEPCDCQTWKNWLQKITEMKPEELVGVSEAYEDAANCLWLLTNSKPCANCKSPIQKNEGCNHMQCAKCKYDFCWICLEEWKKHSSSTGGYYRCTRYEVIQHVEEQSKEMTVEAEKKHKRFQELDRFMHYYTRYKNHEHSYQLEQRLLKTAKEKMEQLSRALKETEGGCPDTTFIEDAVHVLLKTRRILKCSYPYGFFLEPKSTKKEIFELMQTDLEMVTEDLAQKVNRPYLRTPRHKIIRAACLVQQKRQEFLASVARGVAPADSPDAPRRSFAGGTWDWEYLGFASPEYRRRHRQQRRRGDVHSLLSNPTDLDEPSESTFDLPEGSSGRRPGASVVSSASMSVLHSSSLRDYSPASRSANQDSLQALSSLDEDDPNILLAIQLSLQESGLDMDEETRDFLSNETSLGAIGSSLPSRLDSVPRSTESPRAALSSSELLELGDSLMRLGADSDPFSTDTLSSRPLSETRSDFCPSSSDLDSAGQDPSANDNLLGNIMAWFHDMNPQSIALIPPAATTEISAEPQLPCIRDGSEGVRDMELVPPEDSVSKDTGVHEGERAQMEENPLEENILAREELSQAGDSSNEAVGRGDRPDAASQTPQTSSDWLEQVHSV</sequence>
<protein>
    <recommendedName>
        <fullName>Ankyrin repeat and IBR domain-containing protein 1</fullName>
        <ecNumber evidence="2">2.3.2.31</ecNumber>
    </recommendedName>
</protein>
<dbReference type="EC" id="2.3.2.31" evidence="2"/>
<dbReference type="EMBL" id="AK129343">
    <property type="protein sequence ID" value="BAC98153.1"/>
    <property type="molecule type" value="mRNA"/>
</dbReference>
<dbReference type="EMBL" id="BC079620">
    <property type="protein sequence ID" value="AAH79620.1"/>
    <property type="status" value="ALT_SEQ"/>
    <property type="molecule type" value="mRNA"/>
</dbReference>
<dbReference type="CCDS" id="CCDS51408.1"/>
<dbReference type="RefSeq" id="NP_001003909.2">
    <property type="nucleotide sequence ID" value="NM_001003909.4"/>
</dbReference>
<dbReference type="RefSeq" id="NP_001276457.1">
    <property type="nucleotide sequence ID" value="NM_001289528.1"/>
</dbReference>
<dbReference type="RefSeq" id="NP_001276458.1">
    <property type="nucleotide sequence ID" value="NM_001289529.1"/>
</dbReference>
<dbReference type="SMR" id="Q6ZPS6"/>
<dbReference type="BioGRID" id="214259">
    <property type="interactions" value="2"/>
</dbReference>
<dbReference type="FunCoup" id="Q6ZPS6">
    <property type="interactions" value="2667"/>
</dbReference>
<dbReference type="STRING" id="10090.ENSMUSP00000040946"/>
<dbReference type="GlyGen" id="Q6ZPS6">
    <property type="glycosylation" value="2 sites, 1 N-linked glycan (1 site), 1 O-linked glycan (1 site)"/>
</dbReference>
<dbReference type="iPTMnet" id="Q6ZPS6"/>
<dbReference type="PhosphoSitePlus" id="Q6ZPS6"/>
<dbReference type="PaxDb" id="10090-ENSMUSP00000040946"/>
<dbReference type="ProteomicsDB" id="285801"/>
<dbReference type="Pumba" id="Q6ZPS6"/>
<dbReference type="Antibodypedia" id="8661">
    <property type="antibodies" value="30 antibodies from 9 providers"/>
</dbReference>
<dbReference type="DNASU" id="70797"/>
<dbReference type="Ensembl" id="ENSMUST00000043551.11">
    <property type="protein sequence ID" value="ENSMUSP00000040946.7"/>
    <property type="gene ID" value="ENSMUSG00000040351.12"/>
</dbReference>
<dbReference type="GeneID" id="70797"/>
<dbReference type="KEGG" id="mmu:70797"/>
<dbReference type="UCSC" id="uc008who.3">
    <property type="organism name" value="mouse"/>
</dbReference>
<dbReference type="AGR" id="MGI:1918047"/>
<dbReference type="CTD" id="54467"/>
<dbReference type="MGI" id="MGI:1918047">
    <property type="gene designation" value="Ankib1"/>
</dbReference>
<dbReference type="VEuPathDB" id="HostDB:ENSMUSG00000040351"/>
<dbReference type="eggNOG" id="KOG1815">
    <property type="taxonomic scope" value="Eukaryota"/>
</dbReference>
<dbReference type="GeneTree" id="ENSGT00940000157621"/>
<dbReference type="InParanoid" id="Q6ZPS6"/>
<dbReference type="OMA" id="CNPENCC"/>
<dbReference type="OrthoDB" id="69641at2759"/>
<dbReference type="PhylomeDB" id="Q6ZPS6"/>
<dbReference type="TreeFam" id="TF331104"/>
<dbReference type="BioGRID-ORCS" id="70797">
    <property type="hits" value="4 hits in 79 CRISPR screens"/>
</dbReference>
<dbReference type="ChiTaRS" id="Ankib1">
    <property type="organism name" value="mouse"/>
</dbReference>
<dbReference type="PRO" id="PR:Q6ZPS6"/>
<dbReference type="Proteomes" id="UP000000589">
    <property type="component" value="Chromosome 5"/>
</dbReference>
<dbReference type="RNAct" id="Q6ZPS6">
    <property type="molecule type" value="protein"/>
</dbReference>
<dbReference type="Bgee" id="ENSMUSG00000040351">
    <property type="expression patterns" value="Expressed in spermatocyte and 251 other cell types or tissues"/>
</dbReference>
<dbReference type="ExpressionAtlas" id="Q6ZPS6">
    <property type="expression patterns" value="baseline and differential"/>
</dbReference>
<dbReference type="GO" id="GO:0004842">
    <property type="term" value="F:ubiquitin-protein transferase activity"/>
    <property type="evidence" value="ECO:0007669"/>
    <property type="project" value="InterPro"/>
</dbReference>
<dbReference type="GO" id="GO:0008270">
    <property type="term" value="F:zinc ion binding"/>
    <property type="evidence" value="ECO:0007669"/>
    <property type="project" value="UniProtKB-KW"/>
</dbReference>
<dbReference type="GO" id="GO:0016567">
    <property type="term" value="P:protein ubiquitination"/>
    <property type="evidence" value="ECO:0007669"/>
    <property type="project" value="InterPro"/>
</dbReference>
<dbReference type="CDD" id="cd20346">
    <property type="entry name" value="BRcat_RBR_ANKIB1"/>
    <property type="match status" value="1"/>
</dbReference>
<dbReference type="CDD" id="cd20361">
    <property type="entry name" value="Rcat_RBR_ANKIB1"/>
    <property type="match status" value="1"/>
</dbReference>
<dbReference type="CDD" id="cd16774">
    <property type="entry name" value="RING-HC_RBR_ANKIB1"/>
    <property type="match status" value="1"/>
</dbReference>
<dbReference type="FunFam" id="1.20.120.1750:FF:000003">
    <property type="entry name" value="RBR-type E3 ubiquitin transferase"/>
    <property type="match status" value="1"/>
</dbReference>
<dbReference type="FunFam" id="1.25.40.20:FF:000040">
    <property type="entry name" value="RBR-type E3 ubiquitin transferase"/>
    <property type="match status" value="1"/>
</dbReference>
<dbReference type="FunFam" id="3.30.40.10:FF:000129">
    <property type="entry name" value="RBR-type E3 ubiquitin transferase"/>
    <property type="match status" value="1"/>
</dbReference>
<dbReference type="Gene3D" id="1.20.120.1750">
    <property type="match status" value="1"/>
</dbReference>
<dbReference type="Gene3D" id="1.25.40.20">
    <property type="entry name" value="Ankyrin repeat-containing domain"/>
    <property type="match status" value="1"/>
</dbReference>
<dbReference type="Gene3D" id="3.30.40.10">
    <property type="entry name" value="Zinc/RING finger domain, C3HC4 (zinc finger)"/>
    <property type="match status" value="1"/>
</dbReference>
<dbReference type="InterPro" id="IPR002110">
    <property type="entry name" value="Ankyrin_rpt"/>
</dbReference>
<dbReference type="InterPro" id="IPR036770">
    <property type="entry name" value="Ankyrin_rpt-contain_sf"/>
</dbReference>
<dbReference type="InterPro" id="IPR045840">
    <property type="entry name" value="Ariadne"/>
</dbReference>
<dbReference type="InterPro" id="IPR031127">
    <property type="entry name" value="E3_UB_ligase_RBR"/>
</dbReference>
<dbReference type="InterPro" id="IPR002867">
    <property type="entry name" value="IBR_dom"/>
</dbReference>
<dbReference type="InterPro" id="IPR047564">
    <property type="entry name" value="Rcat_RBR_ANKIB1"/>
</dbReference>
<dbReference type="InterPro" id="IPR047563">
    <property type="entry name" value="RING-HC_RBR_ANKIB1"/>
</dbReference>
<dbReference type="InterPro" id="IPR044066">
    <property type="entry name" value="TRIAD_supradom"/>
</dbReference>
<dbReference type="InterPro" id="IPR003903">
    <property type="entry name" value="UIM_dom"/>
</dbReference>
<dbReference type="InterPro" id="IPR001841">
    <property type="entry name" value="Znf_RING"/>
</dbReference>
<dbReference type="InterPro" id="IPR013083">
    <property type="entry name" value="Znf_RING/FYVE/PHD"/>
</dbReference>
<dbReference type="PANTHER" id="PTHR11685">
    <property type="entry name" value="RBR FAMILY RING FINGER AND IBR DOMAIN-CONTAINING"/>
    <property type="match status" value="1"/>
</dbReference>
<dbReference type="Pfam" id="PF00023">
    <property type="entry name" value="Ank"/>
    <property type="match status" value="1"/>
</dbReference>
<dbReference type="Pfam" id="PF12796">
    <property type="entry name" value="Ank_2"/>
    <property type="match status" value="1"/>
</dbReference>
<dbReference type="Pfam" id="PF19422">
    <property type="entry name" value="Ariadne"/>
    <property type="match status" value="1"/>
</dbReference>
<dbReference type="Pfam" id="PF01485">
    <property type="entry name" value="IBR"/>
    <property type="match status" value="1"/>
</dbReference>
<dbReference type="Pfam" id="PF22191">
    <property type="entry name" value="IBR_1"/>
    <property type="match status" value="1"/>
</dbReference>
<dbReference type="SMART" id="SM00248">
    <property type="entry name" value="ANK"/>
    <property type="match status" value="2"/>
</dbReference>
<dbReference type="SMART" id="SM00647">
    <property type="entry name" value="IBR"/>
    <property type="match status" value="2"/>
</dbReference>
<dbReference type="SMART" id="SM00184">
    <property type="entry name" value="RING"/>
    <property type="match status" value="2"/>
</dbReference>
<dbReference type="SUPFAM" id="SSF48403">
    <property type="entry name" value="Ankyrin repeat"/>
    <property type="match status" value="1"/>
</dbReference>
<dbReference type="SUPFAM" id="SSF57850">
    <property type="entry name" value="RING/U-box"/>
    <property type="match status" value="3"/>
</dbReference>
<dbReference type="PROSITE" id="PS50297">
    <property type="entry name" value="ANK_REP_REGION"/>
    <property type="match status" value="1"/>
</dbReference>
<dbReference type="PROSITE" id="PS50088">
    <property type="entry name" value="ANK_REPEAT"/>
    <property type="match status" value="1"/>
</dbReference>
<dbReference type="PROSITE" id="PS51873">
    <property type="entry name" value="TRIAD"/>
    <property type="match status" value="1"/>
</dbReference>
<dbReference type="PROSITE" id="PS50330">
    <property type="entry name" value="UIM"/>
    <property type="match status" value="1"/>
</dbReference>
<dbReference type="PROSITE" id="PS50089">
    <property type="entry name" value="ZF_RING_2"/>
    <property type="match status" value="1"/>
</dbReference>
<organism>
    <name type="scientific">Mus musculus</name>
    <name type="common">Mouse</name>
    <dbReference type="NCBI Taxonomy" id="10090"/>
    <lineage>
        <taxon>Eukaryota</taxon>
        <taxon>Metazoa</taxon>
        <taxon>Chordata</taxon>
        <taxon>Craniata</taxon>
        <taxon>Vertebrata</taxon>
        <taxon>Euteleostomi</taxon>
        <taxon>Mammalia</taxon>
        <taxon>Eutheria</taxon>
        <taxon>Euarchontoglires</taxon>
        <taxon>Glires</taxon>
        <taxon>Rodentia</taxon>
        <taxon>Myomorpha</taxon>
        <taxon>Muroidea</taxon>
        <taxon>Muridae</taxon>
        <taxon>Murinae</taxon>
        <taxon>Mus</taxon>
        <taxon>Mus</taxon>
    </lineage>
</organism>
<reference key="1">
    <citation type="journal article" date="2003" name="DNA Res.">
        <title>Prediction of the coding sequences of mouse homologues of KIAA gene: III. The complete nucleotide sequences of 500 mouse KIAA-homologous cDNAs identified by screening of terminal sequences of cDNA clones randomly sampled from size-fractionated libraries.</title>
        <authorList>
            <person name="Okazaki N."/>
            <person name="Kikuno R."/>
            <person name="Ohara R."/>
            <person name="Inamoto S."/>
            <person name="Koseki H."/>
            <person name="Hiraoka S."/>
            <person name="Saga Y."/>
            <person name="Nagase T."/>
            <person name="Ohara O."/>
            <person name="Koga H."/>
        </authorList>
    </citation>
    <scope>NUCLEOTIDE SEQUENCE [LARGE SCALE MRNA]</scope>
    <source>
        <tissue>Brain</tissue>
    </source>
</reference>
<reference key="2">
    <citation type="journal article" date="2004" name="Genome Res.">
        <title>The status, quality, and expansion of the NIH full-length cDNA project: the Mammalian Gene Collection (MGC).</title>
        <authorList>
            <consortium name="The MGC Project Team"/>
        </authorList>
    </citation>
    <scope>NUCLEOTIDE SEQUENCE [LARGE SCALE MRNA] OF 568-1085</scope>
    <source>
        <strain>C57BL/6J</strain>
        <tissue>Brain</tissue>
    </source>
</reference>
<reference key="3">
    <citation type="journal article" date="2009" name="Immunity">
        <title>The phagosomal proteome in interferon-gamma-activated macrophages.</title>
        <authorList>
            <person name="Trost M."/>
            <person name="English L."/>
            <person name="Lemieux S."/>
            <person name="Courcelles M."/>
            <person name="Desjardins M."/>
            <person name="Thibault P."/>
        </authorList>
    </citation>
    <scope>PHOSPHORYLATION [LARGE SCALE ANALYSIS] AT SER-738</scope>
    <scope>IDENTIFICATION BY MASS SPECTROMETRY [LARGE SCALE ANALYSIS]</scope>
</reference>
<reference key="4">
    <citation type="journal article" date="2010" name="Cell">
        <title>A tissue-specific atlas of mouse protein phosphorylation and expression.</title>
        <authorList>
            <person name="Huttlin E.L."/>
            <person name="Jedrychowski M.P."/>
            <person name="Elias J.E."/>
            <person name="Goswami T."/>
            <person name="Rad R."/>
            <person name="Beausoleil S.A."/>
            <person name="Villen J."/>
            <person name="Haas W."/>
            <person name="Sowa M.E."/>
            <person name="Gygi S.P."/>
        </authorList>
    </citation>
    <scope>PHOSPHORYLATION [LARGE SCALE ANALYSIS] AT SER-738 AND SER-906</scope>
    <scope>IDENTIFICATION BY MASS SPECTROMETRY [LARGE SCALE ANALYSIS]</scope>
    <source>
        <tissue>Brain</tissue>
        <tissue>Brown adipose tissue</tissue>
        <tissue>Heart</tissue>
        <tissue>Kidney</tissue>
        <tissue>Liver</tissue>
        <tissue>Lung</tissue>
        <tissue>Pancreas</tissue>
        <tissue>Spleen</tissue>
        <tissue>Testis</tissue>
    </source>
</reference>
<name>AKIB1_MOUSE</name>
<gene>
    <name type="primary">Ankib1</name>
    <name type="synonym">Kiaa1386</name>
</gene>
<proteinExistence type="evidence at protein level"/>
<feature type="initiator methionine" description="Removed" evidence="3">
    <location>
        <position position="1"/>
    </location>
</feature>
<feature type="chain" id="PRO_0000066893" description="Ankyrin repeat and IBR domain-containing protein 1">
    <location>
        <begin position="2"/>
        <end position="1085"/>
    </location>
</feature>
<feature type="repeat" description="ANK 1">
    <location>
        <begin position="45"/>
        <end position="75"/>
    </location>
</feature>
<feature type="repeat" description="ANK 2">
    <location>
        <begin position="145"/>
        <end position="174"/>
    </location>
</feature>
<feature type="domain" description="UIM" evidence="5">
    <location>
        <begin position="846"/>
        <end position="865"/>
    </location>
</feature>
<feature type="zinc finger region" description="RING-type 1" evidence="6">
    <location>
        <begin position="334"/>
        <end position="384"/>
    </location>
</feature>
<feature type="zinc finger region" description="IBR-type" evidence="6">
    <location>
        <begin position="402"/>
        <end position="479"/>
    </location>
</feature>
<feature type="zinc finger region" description="RING-type 2; atypical" evidence="6">
    <location>
        <begin position="520"/>
        <end position="549"/>
    </location>
</feature>
<feature type="region of interest" description="Disordered" evidence="7">
    <location>
        <begin position="282"/>
        <end position="322"/>
    </location>
</feature>
<feature type="region of interest" description="TRIAD supradomain" evidence="6">
    <location>
        <begin position="330"/>
        <end position="570"/>
    </location>
</feature>
<feature type="region of interest" description="Disordered" evidence="7">
    <location>
        <begin position="764"/>
        <end position="808"/>
    </location>
</feature>
<feature type="region of interest" description="Disordered" evidence="7">
    <location>
        <begin position="884"/>
        <end position="907"/>
    </location>
</feature>
<feature type="region of interest" description="Disordered" evidence="7">
    <location>
        <begin position="921"/>
        <end position="959"/>
    </location>
</feature>
<feature type="region of interest" description="Disordered" evidence="7">
    <location>
        <begin position="1014"/>
        <end position="1085"/>
    </location>
</feature>
<feature type="coiled-coil region" evidence="4">
    <location>
        <begin position="576"/>
        <end position="641"/>
    </location>
</feature>
<feature type="compositionally biased region" description="Low complexity" evidence="7">
    <location>
        <begin position="304"/>
        <end position="319"/>
    </location>
</feature>
<feature type="compositionally biased region" description="Polar residues" evidence="7">
    <location>
        <begin position="926"/>
        <end position="959"/>
    </location>
</feature>
<feature type="compositionally biased region" description="Basic and acidic residues" evidence="7">
    <location>
        <begin position="1018"/>
        <end position="1033"/>
    </location>
</feature>
<feature type="compositionally biased region" description="Polar residues" evidence="7">
    <location>
        <begin position="1068"/>
        <end position="1085"/>
    </location>
</feature>
<feature type="active site" evidence="6">
    <location>
        <position position="533"/>
    </location>
</feature>
<feature type="binding site" evidence="6">
    <location>
        <position position="334"/>
    </location>
    <ligand>
        <name>Zn(2+)</name>
        <dbReference type="ChEBI" id="CHEBI:29105"/>
        <label>1</label>
    </ligand>
</feature>
<feature type="binding site" evidence="6">
    <location>
        <position position="337"/>
    </location>
    <ligand>
        <name>Zn(2+)</name>
        <dbReference type="ChEBI" id="CHEBI:29105"/>
        <label>1</label>
    </ligand>
</feature>
<feature type="binding site" evidence="6">
    <location>
        <position position="352"/>
    </location>
    <ligand>
        <name>Zn(2+)</name>
        <dbReference type="ChEBI" id="CHEBI:29105"/>
        <label>2</label>
    </ligand>
</feature>
<feature type="binding site" evidence="6">
    <location>
        <position position="354"/>
    </location>
    <ligand>
        <name>Zn(2+)</name>
        <dbReference type="ChEBI" id="CHEBI:29105"/>
        <label>2</label>
    </ligand>
</feature>
<feature type="binding site" evidence="6">
    <location>
        <position position="357"/>
    </location>
    <ligand>
        <name>Zn(2+)</name>
        <dbReference type="ChEBI" id="CHEBI:29105"/>
        <label>1</label>
    </ligand>
</feature>
<feature type="binding site" evidence="6">
    <location>
        <position position="360"/>
    </location>
    <ligand>
        <name>Zn(2+)</name>
        <dbReference type="ChEBI" id="CHEBI:29105"/>
        <label>1</label>
    </ligand>
</feature>
<feature type="binding site" evidence="6">
    <location>
        <position position="379"/>
    </location>
    <ligand>
        <name>Zn(2+)</name>
        <dbReference type="ChEBI" id="CHEBI:29105"/>
        <label>2</label>
    </ligand>
</feature>
<feature type="binding site" evidence="6">
    <location>
        <position position="384"/>
    </location>
    <ligand>
        <name>Zn(2+)</name>
        <dbReference type="ChEBI" id="CHEBI:29105"/>
        <label>2</label>
    </ligand>
</feature>
<feature type="binding site" evidence="6">
    <location>
        <position position="466"/>
    </location>
    <ligand>
        <name>Zn(2+)</name>
        <dbReference type="ChEBI" id="CHEBI:29105"/>
        <label>3</label>
    </ligand>
</feature>
<feature type="binding site" evidence="6">
    <location>
        <position position="469"/>
    </location>
    <ligand>
        <name>Zn(2+)</name>
        <dbReference type="ChEBI" id="CHEBI:29105"/>
        <label>3</label>
    </ligand>
</feature>
<feature type="binding site" evidence="6">
    <location>
        <position position="474"/>
    </location>
    <ligand>
        <name>Zn(2+)</name>
        <dbReference type="ChEBI" id="CHEBI:29105"/>
        <label>3</label>
    </ligand>
</feature>
<feature type="binding site" evidence="6">
    <location>
        <position position="479"/>
    </location>
    <ligand>
        <name>Zn(2+)</name>
        <dbReference type="ChEBI" id="CHEBI:29105"/>
        <label>3</label>
    </ligand>
</feature>
<feature type="binding site" evidence="6">
    <location>
        <position position="520"/>
    </location>
    <ligand>
        <name>Zn(2+)</name>
        <dbReference type="ChEBI" id="CHEBI:29105"/>
        <label>4</label>
    </ligand>
</feature>
<feature type="binding site" evidence="6">
    <location>
        <position position="523"/>
    </location>
    <ligand>
        <name>Zn(2+)</name>
        <dbReference type="ChEBI" id="CHEBI:29105"/>
        <label>4</label>
    </ligand>
</feature>
<feature type="binding site" evidence="6">
    <location>
        <position position="538"/>
    </location>
    <ligand>
        <name>Zn(2+)</name>
        <dbReference type="ChEBI" id="CHEBI:29105"/>
        <label>4</label>
    </ligand>
</feature>
<feature type="binding site" evidence="6">
    <location>
        <position position="541"/>
    </location>
    <ligand>
        <name>Zn(2+)</name>
        <dbReference type="ChEBI" id="CHEBI:29105"/>
        <label>4</label>
    </ligand>
</feature>
<feature type="binding site" evidence="6">
    <location>
        <position position="546"/>
    </location>
    <ligand>
        <name>Zn(2+)</name>
        <dbReference type="ChEBI" id="CHEBI:29105"/>
        <label>5</label>
    </ligand>
</feature>
<feature type="binding site" evidence="6">
    <location>
        <position position="549"/>
    </location>
    <ligand>
        <name>Zn(2+)</name>
        <dbReference type="ChEBI" id="CHEBI:29105"/>
        <label>5</label>
    </ligand>
</feature>
<feature type="binding site" evidence="6">
    <location>
        <position position="556"/>
    </location>
    <ligand>
        <name>Zn(2+)</name>
        <dbReference type="ChEBI" id="CHEBI:29105"/>
        <label>5</label>
    </ligand>
</feature>
<feature type="binding site" evidence="6">
    <location>
        <position position="566"/>
    </location>
    <ligand>
        <name>Zn(2+)</name>
        <dbReference type="ChEBI" id="CHEBI:29105"/>
        <label>5</label>
    </ligand>
</feature>
<feature type="modified residue" description="Phosphoserine" evidence="9 10">
    <location>
        <position position="738"/>
    </location>
</feature>
<feature type="modified residue" description="Phosphoserine" evidence="3">
    <location>
        <position position="879"/>
    </location>
</feature>
<feature type="modified residue" description="Phosphoserine" evidence="10">
    <location>
        <position position="906"/>
    </location>
</feature>
<feature type="lipid moiety-binding region" description="N-myristoyl glycine" evidence="1">
    <location>
        <position position="2"/>
    </location>
</feature>